<organism>
    <name type="scientific">Dictyostelium discoideum</name>
    <name type="common">Social amoeba</name>
    <dbReference type="NCBI Taxonomy" id="44689"/>
    <lineage>
        <taxon>Eukaryota</taxon>
        <taxon>Amoebozoa</taxon>
        <taxon>Evosea</taxon>
        <taxon>Eumycetozoa</taxon>
        <taxon>Dictyostelia</taxon>
        <taxon>Dictyosteliales</taxon>
        <taxon>Dictyosteliaceae</taxon>
        <taxon>Dictyostelium</taxon>
    </lineage>
</organism>
<accession>Q54KL5</accession>
<sequence>MESGPASMSSSSSYLYQEQQQQQPQQTESIPQTPNYILKYTLKGHLKSISSVKFSPDGKWLASASADKTIKIWGAYDGKFERTLEGHKEGISDIAWSQDSKLICSASDDKTIKIWDVESGKMVKTLKGHKEYVFGVSFNPQSNLIVSGSFDENVRIWDVNTGECTKMISAHSDPVTGVHFNRDGTLVVSGSYDGTVRIWDTTTGQLLNTISTEDGKEVSFVKFSPNGKFVLAGTLDNTLRLWSYNNNKKCLKTYTGHKNEKYCIFSTFSVTCGKWIVTGSEDNLIYIYNLQTREIVQTLAGHEDVVLTVACHPTENIIASGALEKDRSVKIWKHM</sequence>
<protein>
    <recommendedName>
        <fullName>WD repeat-containing protein 5 homolog</fullName>
    </recommendedName>
</protein>
<feature type="chain" id="PRO_0000327608" description="WD repeat-containing protein 5 homolog">
    <location>
        <begin position="1"/>
        <end position="335"/>
    </location>
</feature>
<feature type="repeat" description="WD 1">
    <location>
        <begin position="44"/>
        <end position="83"/>
    </location>
</feature>
<feature type="repeat" description="WD 2">
    <location>
        <begin position="86"/>
        <end position="127"/>
    </location>
</feature>
<feature type="repeat" description="WD 3">
    <location>
        <begin position="129"/>
        <end position="167"/>
    </location>
</feature>
<feature type="repeat" description="WD 4">
    <location>
        <begin position="170"/>
        <end position="209"/>
    </location>
</feature>
<feature type="repeat" description="WD 5">
    <location>
        <begin position="213"/>
        <end position="252"/>
    </location>
</feature>
<feature type="repeat" description="WD 6">
    <location>
        <begin position="256"/>
        <end position="298"/>
    </location>
</feature>
<feature type="repeat" description="WD 7">
    <location>
        <begin position="301"/>
        <end position="335"/>
    </location>
</feature>
<feature type="region of interest" description="Disordered" evidence="2">
    <location>
        <begin position="1"/>
        <end position="30"/>
    </location>
</feature>
<feature type="compositionally biased region" description="Low complexity" evidence="2">
    <location>
        <begin position="9"/>
        <end position="30"/>
    </location>
</feature>
<dbReference type="EMBL" id="AAFI02000099">
    <property type="protein sequence ID" value="EAL63798.1"/>
    <property type="molecule type" value="Genomic_DNA"/>
</dbReference>
<dbReference type="RefSeq" id="XP_637302.1">
    <property type="nucleotide sequence ID" value="XM_632210.1"/>
</dbReference>
<dbReference type="SMR" id="Q54KL5"/>
<dbReference type="FunCoup" id="Q54KL5">
    <property type="interactions" value="351"/>
</dbReference>
<dbReference type="STRING" id="44689.Q54KL5"/>
<dbReference type="PaxDb" id="44689-DDB0232948"/>
<dbReference type="EnsemblProtists" id="EAL63798">
    <property type="protein sequence ID" value="EAL63798"/>
    <property type="gene ID" value="DDB_G0287273"/>
</dbReference>
<dbReference type="GeneID" id="8626039"/>
<dbReference type="KEGG" id="ddi:DDB_G0287273"/>
<dbReference type="dictyBase" id="DDB_G0287273">
    <property type="gene designation" value="wdr5"/>
</dbReference>
<dbReference type="VEuPathDB" id="AmoebaDB:DDB_G0287273"/>
<dbReference type="eggNOG" id="KOG0266">
    <property type="taxonomic scope" value="Eukaryota"/>
</dbReference>
<dbReference type="HOGENOM" id="CLU_000288_57_1_1"/>
<dbReference type="InParanoid" id="Q54KL5"/>
<dbReference type="OMA" id="CKGHDTA"/>
<dbReference type="PhylomeDB" id="Q54KL5"/>
<dbReference type="Reactome" id="R-DDI-3214841">
    <property type="pathway name" value="PKMTs methylate histone lysines"/>
</dbReference>
<dbReference type="Reactome" id="R-DDI-3214858">
    <property type="pathway name" value="RMTs methylate histone arginines"/>
</dbReference>
<dbReference type="Reactome" id="R-DDI-8951664">
    <property type="pathway name" value="Neddylation"/>
</dbReference>
<dbReference type="Reactome" id="R-DDI-9772755">
    <property type="pathway name" value="Formation of WDR5-containing histone-modifying complexes"/>
</dbReference>
<dbReference type="PRO" id="PR:Q54KL5"/>
<dbReference type="Proteomes" id="UP000002195">
    <property type="component" value="Chromosome 5"/>
</dbReference>
<dbReference type="GO" id="GO:0035097">
    <property type="term" value="C:histone methyltransferase complex"/>
    <property type="evidence" value="ECO:0000250"/>
    <property type="project" value="dictyBase"/>
</dbReference>
<dbReference type="GO" id="GO:0048188">
    <property type="term" value="C:Set1C/COMPASS complex"/>
    <property type="evidence" value="ECO:0000314"/>
    <property type="project" value="dictyBase"/>
</dbReference>
<dbReference type="GO" id="GO:0042393">
    <property type="term" value="F:histone binding"/>
    <property type="evidence" value="ECO:0000250"/>
    <property type="project" value="dictyBase"/>
</dbReference>
<dbReference type="GO" id="GO:0045815">
    <property type="term" value="P:transcription initiation-coupled chromatin remodeling"/>
    <property type="evidence" value="ECO:0000314"/>
    <property type="project" value="dictyBase"/>
</dbReference>
<dbReference type="CDD" id="cd00200">
    <property type="entry name" value="WD40"/>
    <property type="match status" value="1"/>
</dbReference>
<dbReference type="FunFam" id="2.130.10.10:FF:000228">
    <property type="entry name" value="COMPASS-like H3K4 histone methylase component WDR5A"/>
    <property type="match status" value="1"/>
</dbReference>
<dbReference type="Gene3D" id="2.130.10.10">
    <property type="entry name" value="YVTN repeat-like/Quinoprotein amine dehydrogenase"/>
    <property type="match status" value="1"/>
</dbReference>
<dbReference type="InterPro" id="IPR020472">
    <property type="entry name" value="G-protein_beta_WD-40_rep"/>
</dbReference>
<dbReference type="InterPro" id="IPR015943">
    <property type="entry name" value="WD40/YVTN_repeat-like_dom_sf"/>
</dbReference>
<dbReference type="InterPro" id="IPR019775">
    <property type="entry name" value="WD40_repeat_CS"/>
</dbReference>
<dbReference type="InterPro" id="IPR036322">
    <property type="entry name" value="WD40_repeat_dom_sf"/>
</dbReference>
<dbReference type="InterPro" id="IPR001680">
    <property type="entry name" value="WD40_rpt"/>
</dbReference>
<dbReference type="PANTHER" id="PTHR22847:SF637">
    <property type="entry name" value="WD REPEAT DOMAIN 5B"/>
    <property type="match status" value="1"/>
</dbReference>
<dbReference type="PANTHER" id="PTHR22847">
    <property type="entry name" value="WD40 REPEAT PROTEIN"/>
    <property type="match status" value="1"/>
</dbReference>
<dbReference type="Pfam" id="PF25175">
    <property type="entry name" value="Beta-prop_WDR5"/>
    <property type="match status" value="1"/>
</dbReference>
<dbReference type="PIRSF" id="PIRSF002394">
    <property type="entry name" value="GN-bd_beta"/>
    <property type="match status" value="1"/>
</dbReference>
<dbReference type="PRINTS" id="PR00320">
    <property type="entry name" value="GPROTEINBRPT"/>
</dbReference>
<dbReference type="SMART" id="SM00320">
    <property type="entry name" value="WD40"/>
    <property type="match status" value="7"/>
</dbReference>
<dbReference type="SUPFAM" id="SSF50978">
    <property type="entry name" value="WD40 repeat-like"/>
    <property type="match status" value="1"/>
</dbReference>
<dbReference type="PROSITE" id="PS00678">
    <property type="entry name" value="WD_REPEATS_1"/>
    <property type="match status" value="3"/>
</dbReference>
<dbReference type="PROSITE" id="PS50082">
    <property type="entry name" value="WD_REPEATS_2"/>
    <property type="match status" value="5"/>
</dbReference>
<dbReference type="PROSITE" id="PS50294">
    <property type="entry name" value="WD_REPEATS_REGION"/>
    <property type="match status" value="1"/>
</dbReference>
<evidence type="ECO:0000250" key="1"/>
<evidence type="ECO:0000256" key="2">
    <source>
        <dbReference type="SAM" id="MobiDB-lite"/>
    </source>
</evidence>
<evidence type="ECO:0000305" key="3"/>
<reference key="1">
    <citation type="journal article" date="2005" name="Nature">
        <title>The genome of the social amoeba Dictyostelium discoideum.</title>
        <authorList>
            <person name="Eichinger L."/>
            <person name="Pachebat J.A."/>
            <person name="Gloeckner G."/>
            <person name="Rajandream M.A."/>
            <person name="Sucgang R."/>
            <person name="Berriman M."/>
            <person name="Song J."/>
            <person name="Olsen R."/>
            <person name="Szafranski K."/>
            <person name="Xu Q."/>
            <person name="Tunggal B."/>
            <person name="Kummerfeld S."/>
            <person name="Madera M."/>
            <person name="Konfortov B.A."/>
            <person name="Rivero F."/>
            <person name="Bankier A.T."/>
            <person name="Lehmann R."/>
            <person name="Hamlin N."/>
            <person name="Davies R."/>
            <person name="Gaudet P."/>
            <person name="Fey P."/>
            <person name="Pilcher K."/>
            <person name="Chen G."/>
            <person name="Saunders D."/>
            <person name="Sodergren E.J."/>
            <person name="Davis P."/>
            <person name="Kerhornou A."/>
            <person name="Nie X."/>
            <person name="Hall N."/>
            <person name="Anjard C."/>
            <person name="Hemphill L."/>
            <person name="Bason N."/>
            <person name="Farbrother P."/>
            <person name="Desany B."/>
            <person name="Just E."/>
            <person name="Morio T."/>
            <person name="Rost R."/>
            <person name="Churcher C.M."/>
            <person name="Cooper J."/>
            <person name="Haydock S."/>
            <person name="van Driessche N."/>
            <person name="Cronin A."/>
            <person name="Goodhead I."/>
            <person name="Muzny D.M."/>
            <person name="Mourier T."/>
            <person name="Pain A."/>
            <person name="Lu M."/>
            <person name="Harper D."/>
            <person name="Lindsay R."/>
            <person name="Hauser H."/>
            <person name="James K.D."/>
            <person name="Quiles M."/>
            <person name="Madan Babu M."/>
            <person name="Saito T."/>
            <person name="Buchrieser C."/>
            <person name="Wardroper A."/>
            <person name="Felder M."/>
            <person name="Thangavelu M."/>
            <person name="Johnson D."/>
            <person name="Knights A."/>
            <person name="Loulseged H."/>
            <person name="Mungall K.L."/>
            <person name="Oliver K."/>
            <person name="Price C."/>
            <person name="Quail M.A."/>
            <person name="Urushihara H."/>
            <person name="Hernandez J."/>
            <person name="Rabbinowitsch E."/>
            <person name="Steffen D."/>
            <person name="Sanders M."/>
            <person name="Ma J."/>
            <person name="Kohara Y."/>
            <person name="Sharp S."/>
            <person name="Simmonds M.N."/>
            <person name="Spiegler S."/>
            <person name="Tivey A."/>
            <person name="Sugano S."/>
            <person name="White B."/>
            <person name="Walker D."/>
            <person name="Woodward J.R."/>
            <person name="Winckler T."/>
            <person name="Tanaka Y."/>
            <person name="Shaulsky G."/>
            <person name="Schleicher M."/>
            <person name="Weinstock G.M."/>
            <person name="Rosenthal A."/>
            <person name="Cox E.C."/>
            <person name="Chisholm R.L."/>
            <person name="Gibbs R.A."/>
            <person name="Loomis W.F."/>
            <person name="Platzer M."/>
            <person name="Kay R.R."/>
            <person name="Williams J.G."/>
            <person name="Dear P.H."/>
            <person name="Noegel A.A."/>
            <person name="Barrell B.G."/>
            <person name="Kuspa A."/>
        </authorList>
    </citation>
    <scope>NUCLEOTIDE SEQUENCE [LARGE SCALE GENOMIC DNA]</scope>
    <source>
        <strain>AX4</strain>
    </source>
</reference>
<name>WDR5_DICDI</name>
<proteinExistence type="inferred from homology"/>
<keyword id="KW-0539">Nucleus</keyword>
<keyword id="KW-1185">Reference proteome</keyword>
<keyword id="KW-0677">Repeat</keyword>
<keyword id="KW-0853">WD repeat</keyword>
<gene>
    <name type="primary">wdr5</name>
    <name type="ORF">DDB_G0287273</name>
</gene>
<comment type="subunit">
    <text evidence="1">May interact with the histone-lysine N-methyltransferase complex.</text>
</comment>
<comment type="subcellular location">
    <subcellularLocation>
        <location evidence="1">Nucleus</location>
    </subcellularLocation>
</comment>
<comment type="similarity">
    <text evidence="3">Belongs to the WD repeat WDR5/wds family.</text>
</comment>